<protein>
    <recommendedName>
        <fullName evidence="1">Outer membrane protein assembly factor BamA</fullName>
    </recommendedName>
</protein>
<feature type="signal peptide" evidence="1">
    <location>
        <begin position="1"/>
        <end position="20"/>
    </location>
</feature>
<feature type="chain" id="PRO_1000145777" description="Outer membrane protein assembly factor BamA">
    <location>
        <begin position="21"/>
        <end position="810"/>
    </location>
</feature>
<feature type="domain" description="POTRA 1" evidence="2">
    <location>
        <begin position="24"/>
        <end position="91"/>
    </location>
</feature>
<feature type="domain" description="POTRA 2" evidence="2">
    <location>
        <begin position="92"/>
        <end position="172"/>
    </location>
</feature>
<feature type="domain" description="POTRA 3" evidence="2">
    <location>
        <begin position="175"/>
        <end position="263"/>
    </location>
</feature>
<feature type="domain" description="POTRA 4" evidence="2">
    <location>
        <begin position="266"/>
        <end position="344"/>
    </location>
</feature>
<feature type="domain" description="POTRA 5" evidence="2">
    <location>
        <begin position="347"/>
        <end position="421"/>
    </location>
</feature>
<organism>
    <name type="scientific">Escherichia coli (strain SMS-3-5 / SECEC)</name>
    <dbReference type="NCBI Taxonomy" id="439855"/>
    <lineage>
        <taxon>Bacteria</taxon>
        <taxon>Pseudomonadati</taxon>
        <taxon>Pseudomonadota</taxon>
        <taxon>Gammaproteobacteria</taxon>
        <taxon>Enterobacterales</taxon>
        <taxon>Enterobacteriaceae</taxon>
        <taxon>Escherichia</taxon>
    </lineage>
</organism>
<dbReference type="EMBL" id="CP000970">
    <property type="protein sequence ID" value="ACB19851.1"/>
    <property type="molecule type" value="Genomic_DNA"/>
</dbReference>
<dbReference type="RefSeq" id="WP_001240891.1">
    <property type="nucleotide sequence ID" value="NC_010498.1"/>
</dbReference>
<dbReference type="SMR" id="B1LGX9"/>
<dbReference type="KEGG" id="ecm:EcSMS35_0188"/>
<dbReference type="HOGENOM" id="CLU_007664_1_0_6"/>
<dbReference type="Proteomes" id="UP000007011">
    <property type="component" value="Chromosome"/>
</dbReference>
<dbReference type="GO" id="GO:1990063">
    <property type="term" value="C:Bam protein complex"/>
    <property type="evidence" value="ECO:0007669"/>
    <property type="project" value="TreeGrafter"/>
</dbReference>
<dbReference type="GO" id="GO:0043165">
    <property type="term" value="P:Gram-negative-bacterium-type cell outer membrane assembly"/>
    <property type="evidence" value="ECO:0007669"/>
    <property type="project" value="UniProtKB-UniRule"/>
</dbReference>
<dbReference type="GO" id="GO:0051205">
    <property type="term" value="P:protein insertion into membrane"/>
    <property type="evidence" value="ECO:0007669"/>
    <property type="project" value="UniProtKB-UniRule"/>
</dbReference>
<dbReference type="FunFam" id="2.40.160.50:FF:000001">
    <property type="entry name" value="Outer membrane protein assembly factor BamA"/>
    <property type="match status" value="1"/>
</dbReference>
<dbReference type="FunFam" id="3.10.20.310:FF:000001">
    <property type="entry name" value="Outer membrane protein assembly factor BamA"/>
    <property type="match status" value="1"/>
</dbReference>
<dbReference type="FunFam" id="3.10.20.310:FF:000002">
    <property type="entry name" value="Outer membrane protein assembly factor BamA"/>
    <property type="match status" value="1"/>
</dbReference>
<dbReference type="FunFam" id="3.10.20.310:FF:000003">
    <property type="entry name" value="Outer membrane protein assembly factor BamA"/>
    <property type="match status" value="1"/>
</dbReference>
<dbReference type="FunFam" id="3.10.20.310:FF:000004">
    <property type="entry name" value="Outer membrane protein assembly factor BamA"/>
    <property type="match status" value="1"/>
</dbReference>
<dbReference type="FunFam" id="3.10.20.310:FF:000005">
    <property type="entry name" value="Outer membrane protein assembly factor BamA"/>
    <property type="match status" value="1"/>
</dbReference>
<dbReference type="Gene3D" id="3.10.20.310">
    <property type="entry name" value="membrane protein fhac"/>
    <property type="match status" value="5"/>
</dbReference>
<dbReference type="Gene3D" id="2.40.160.50">
    <property type="entry name" value="membrane protein fhac: a member of the omp85/tpsb transporter family"/>
    <property type="match status" value="1"/>
</dbReference>
<dbReference type="HAMAP" id="MF_01430">
    <property type="entry name" value="OM_assembly_BamA"/>
    <property type="match status" value="1"/>
</dbReference>
<dbReference type="InterPro" id="IPR000184">
    <property type="entry name" value="Bac_surfAg_D15"/>
</dbReference>
<dbReference type="InterPro" id="IPR010827">
    <property type="entry name" value="BamA/TamA_POTRA"/>
</dbReference>
<dbReference type="InterPro" id="IPR039910">
    <property type="entry name" value="D15-like"/>
</dbReference>
<dbReference type="InterPro" id="IPR023707">
    <property type="entry name" value="OM_assembly_BamA"/>
</dbReference>
<dbReference type="InterPro" id="IPR034746">
    <property type="entry name" value="POTRA"/>
</dbReference>
<dbReference type="NCBIfam" id="TIGR03303">
    <property type="entry name" value="OM_YaeT"/>
    <property type="match status" value="1"/>
</dbReference>
<dbReference type="NCBIfam" id="NF008287">
    <property type="entry name" value="PRK11067.1"/>
    <property type="match status" value="1"/>
</dbReference>
<dbReference type="PANTHER" id="PTHR12815:SF23">
    <property type="entry name" value="OUTER MEMBRANE PROTEIN ASSEMBLY FACTOR BAMA"/>
    <property type="match status" value="1"/>
</dbReference>
<dbReference type="PANTHER" id="PTHR12815">
    <property type="entry name" value="SORTING AND ASSEMBLY MACHINERY SAMM50 PROTEIN FAMILY MEMBER"/>
    <property type="match status" value="1"/>
</dbReference>
<dbReference type="Pfam" id="PF01103">
    <property type="entry name" value="Omp85"/>
    <property type="match status" value="1"/>
</dbReference>
<dbReference type="Pfam" id="PF07244">
    <property type="entry name" value="POTRA"/>
    <property type="match status" value="4"/>
</dbReference>
<dbReference type="PIRSF" id="PIRSF006076">
    <property type="entry name" value="OM_assembly_OMP85"/>
    <property type="match status" value="1"/>
</dbReference>
<dbReference type="PROSITE" id="PS51779">
    <property type="entry name" value="POTRA"/>
    <property type="match status" value="5"/>
</dbReference>
<keyword id="KW-0998">Cell outer membrane</keyword>
<keyword id="KW-0472">Membrane</keyword>
<keyword id="KW-0677">Repeat</keyword>
<keyword id="KW-0732">Signal</keyword>
<keyword id="KW-0812">Transmembrane</keyword>
<keyword id="KW-1134">Transmembrane beta strand</keyword>
<reference key="1">
    <citation type="journal article" date="2008" name="J. Bacteriol.">
        <title>Insights into the environmental resistance gene pool from the genome sequence of the multidrug-resistant environmental isolate Escherichia coli SMS-3-5.</title>
        <authorList>
            <person name="Fricke W.F."/>
            <person name="Wright M.S."/>
            <person name="Lindell A.H."/>
            <person name="Harkins D.M."/>
            <person name="Baker-Austin C."/>
            <person name="Ravel J."/>
            <person name="Stepanauskas R."/>
        </authorList>
    </citation>
    <scope>NUCLEOTIDE SEQUENCE [LARGE SCALE GENOMIC DNA]</scope>
    <source>
        <strain>SMS-3-5 / SECEC</strain>
    </source>
</reference>
<gene>
    <name evidence="1" type="primary">bamA</name>
    <name type="synonym">yaeT</name>
    <name type="ordered locus">EcSMS35_0188</name>
</gene>
<evidence type="ECO:0000255" key="1">
    <source>
        <dbReference type="HAMAP-Rule" id="MF_01430"/>
    </source>
</evidence>
<evidence type="ECO:0000255" key="2">
    <source>
        <dbReference type="PROSITE-ProRule" id="PRU01115"/>
    </source>
</evidence>
<name>BAMA_ECOSM</name>
<proteinExistence type="inferred from homology"/>
<accession>B1LGX9</accession>
<comment type="function">
    <text evidence="1">Part of the outer membrane protein assembly complex, which is involved in assembly and insertion of beta-barrel proteins into the outer membrane. Constitutes, with BamD, the core component of the assembly machinery.</text>
</comment>
<comment type="subunit">
    <text evidence="1">Part of the Bam complex, which is composed of the outer membrane protein BamA, and four lipoproteins BamB, BamC, BamD and BamE.</text>
</comment>
<comment type="subcellular location">
    <subcellularLocation>
        <location evidence="1">Cell outer membrane</location>
    </subcellularLocation>
</comment>
<comment type="similarity">
    <text evidence="1">Belongs to the BamA family.</text>
</comment>
<sequence>MAMKKLLIASLLFSSATVYGAEGFVVKDIHFEGLQRVAVGAALLSMPVRTGDTVNDEDISNTIRALFATGNFEDVRVLRDGDTLLVQVKERPTIASITFSGNKSVKDDMLKQNLEASGVRVGESLDRTTIADIEKGLEDFYYSVGKYSASVKAVVTPLPRNRVDLKLVFQEGVSAEIQQINIVGNHAFTTDELISHFQLRDEVPWWNVVGDRKYQKQKLAGDLETLRSYYLDRGYARFNIDSTQVSLTPDKKGIYVTVNITEGDQYKLSGVEVSGNLAGHSAEIEQLTKIEPGELYNGTKVTKMEDDIKKLLGRYGYAYPRVQSMPEINDADKTVKLRVNVDAGNRFYVRKIRFEGNDTSKDAVLRREMRQMEGAWLGSDLVDQGKERLNRLGFFETVDTDTQRVPGSPDQVDVVYKVKERNTGSFNFGIGYGTESGVSFQAGVQQDNWLGTGYAVGINGTKNDYQTYAELSVTNPYFTVDGVSLGGRLFYNDFQADDADLSDYTNKSYGTDVTLGFPINEYNSLRAGLGYVHNSLSNMQPQVAMWRYLYSMGEHPSTSDQDNSFKTDDFTFNYGWTFNKLDRGYFPTDGSRVNLTGKVTIPGSDNEYYKVTLDTATYVPIDDDHKWVVLGRTRWGYGDGLGGKEMPFYENFYAGGSSTVRGFQSNTIGPKAVYFPYSPNGYDPSNDYACATQDGAKDLCKSDDAVGGNAMAVASLEFITPTPFISDKYANSVRTSFFWDMGTVWDTNWDSSQYSGYPDYSDPSNIRMSAGIALQWMSPLGPLVFSYAQPFKKYDGDKAEQFQFNIGKTW</sequence>